<gene>
    <name type="ordered locus">NT01EI_2691</name>
</gene>
<dbReference type="EMBL" id="CP001600">
    <property type="protein sequence ID" value="ACR69859.1"/>
    <property type="molecule type" value="Genomic_DNA"/>
</dbReference>
<dbReference type="RefSeq" id="WP_015871962.1">
    <property type="nucleotide sequence ID" value="NZ_CP169062.1"/>
</dbReference>
<dbReference type="SMR" id="C5B8J8"/>
<dbReference type="STRING" id="67780.B6E78_05445"/>
<dbReference type="KEGG" id="eic:NT01EI_2691"/>
<dbReference type="PATRIC" id="fig|634503.3.peg.2405"/>
<dbReference type="HOGENOM" id="CLU_101021_1_0_6"/>
<dbReference type="OrthoDB" id="5589463at2"/>
<dbReference type="Proteomes" id="UP000001485">
    <property type="component" value="Chromosome"/>
</dbReference>
<dbReference type="Gene3D" id="1.10.287.680">
    <property type="entry name" value="Helix hairpin bin"/>
    <property type="match status" value="1"/>
</dbReference>
<dbReference type="Gene3D" id="1.10.3190.10">
    <property type="entry name" value="yfbu gene product, domain 2"/>
    <property type="match status" value="1"/>
</dbReference>
<dbReference type="HAMAP" id="MF_00762">
    <property type="entry name" value="UPF0304"/>
    <property type="match status" value="1"/>
</dbReference>
<dbReference type="InterPro" id="IPR005587">
    <property type="entry name" value="UPF0304_YfbU"/>
</dbReference>
<dbReference type="InterPro" id="IPR023146">
    <property type="entry name" value="YfbU_alpha-helical_sf"/>
</dbReference>
<dbReference type="InterPro" id="IPR023145">
    <property type="entry name" value="YfbU_helix-hairpin_sf"/>
</dbReference>
<dbReference type="NCBIfam" id="NF003936">
    <property type="entry name" value="PRK05445.1"/>
    <property type="match status" value="1"/>
</dbReference>
<dbReference type="Pfam" id="PF03887">
    <property type="entry name" value="YfbU"/>
    <property type="match status" value="1"/>
</dbReference>
<dbReference type="PIRSF" id="PIRSF006272">
    <property type="entry name" value="UCP006272"/>
    <property type="match status" value="1"/>
</dbReference>
<dbReference type="SUPFAM" id="SSF116960">
    <property type="entry name" value="YfbU-like"/>
    <property type="match status" value="1"/>
</dbReference>
<feature type="chain" id="PRO_1000212884" description="UPF0304 protein NT01EI_2691">
    <location>
        <begin position="1"/>
        <end position="164"/>
    </location>
</feature>
<sequence>MEMTNAQRLLLSNQYKMMSMLDPENAERYRRLQTIIERGFGLQLRELDRDFGELPEETCRSIIDIMEMHHALQVSYNNLKDRQDIDARRLEFLGFDAATEARYLSYVRFLVNTEGRYTHFDCGSHGFNAQTKMWDKYLRMLAVWHACPRQYHLSAVEIMQILNA</sequence>
<proteinExistence type="inferred from homology"/>
<organism>
    <name type="scientific">Edwardsiella ictaluri (strain 93-146)</name>
    <dbReference type="NCBI Taxonomy" id="634503"/>
    <lineage>
        <taxon>Bacteria</taxon>
        <taxon>Pseudomonadati</taxon>
        <taxon>Pseudomonadota</taxon>
        <taxon>Gammaproteobacteria</taxon>
        <taxon>Enterobacterales</taxon>
        <taxon>Hafniaceae</taxon>
        <taxon>Edwardsiella</taxon>
    </lineage>
</organism>
<comment type="similarity">
    <text evidence="1">Belongs to the UPF0304 family.</text>
</comment>
<name>Y2691_EDWI9</name>
<accession>C5B8J8</accession>
<evidence type="ECO:0000255" key="1">
    <source>
        <dbReference type="HAMAP-Rule" id="MF_00762"/>
    </source>
</evidence>
<reference key="1">
    <citation type="submission" date="2009-03" db="EMBL/GenBank/DDBJ databases">
        <title>Complete genome sequence of Edwardsiella ictaluri 93-146.</title>
        <authorList>
            <person name="Williams M.L."/>
            <person name="Gillaspy A.F."/>
            <person name="Dyer D.W."/>
            <person name="Thune R.L."/>
            <person name="Waldbieser G.C."/>
            <person name="Schuster S.C."/>
            <person name="Gipson J."/>
            <person name="Zaitshik J."/>
            <person name="Landry C."/>
            <person name="Lawrence M.L."/>
        </authorList>
    </citation>
    <scope>NUCLEOTIDE SEQUENCE [LARGE SCALE GENOMIC DNA]</scope>
    <source>
        <strain>93-146</strain>
    </source>
</reference>
<protein>
    <recommendedName>
        <fullName evidence="1">UPF0304 protein NT01EI_2691</fullName>
    </recommendedName>
</protein>